<accession>B5XUQ1</accession>
<comment type="function">
    <text evidence="1">Catalyzes the transfer of the diacylglyceryl group from phosphatidylglycerol to the sulfhydryl group of the N-terminal cysteine of a prolipoprotein, the first step in the formation of mature lipoproteins.</text>
</comment>
<comment type="catalytic activity">
    <reaction evidence="1">
        <text>L-cysteinyl-[prolipoprotein] + a 1,2-diacyl-sn-glycero-3-phospho-(1'-sn-glycerol) = an S-1,2-diacyl-sn-glyceryl-L-cysteinyl-[prolipoprotein] + sn-glycerol 1-phosphate + H(+)</text>
        <dbReference type="Rhea" id="RHEA:56712"/>
        <dbReference type="Rhea" id="RHEA-COMP:14679"/>
        <dbReference type="Rhea" id="RHEA-COMP:14680"/>
        <dbReference type="ChEBI" id="CHEBI:15378"/>
        <dbReference type="ChEBI" id="CHEBI:29950"/>
        <dbReference type="ChEBI" id="CHEBI:57685"/>
        <dbReference type="ChEBI" id="CHEBI:64716"/>
        <dbReference type="ChEBI" id="CHEBI:140658"/>
        <dbReference type="EC" id="2.5.1.145"/>
    </reaction>
</comment>
<comment type="pathway">
    <text evidence="1">Protein modification; lipoprotein biosynthesis (diacylglyceryl transfer).</text>
</comment>
<comment type="subcellular location">
    <subcellularLocation>
        <location evidence="1">Cell inner membrane</location>
        <topology evidence="1">Multi-pass membrane protein</topology>
    </subcellularLocation>
</comment>
<comment type="similarity">
    <text evidence="1">Belongs to the Lgt family.</text>
</comment>
<name>LGT_KLEP3</name>
<protein>
    <recommendedName>
        <fullName evidence="1">Phosphatidylglycerol--prolipoprotein diacylglyceryl transferase</fullName>
        <ecNumber evidence="1">2.5.1.145</ecNumber>
    </recommendedName>
</protein>
<keyword id="KW-0997">Cell inner membrane</keyword>
<keyword id="KW-1003">Cell membrane</keyword>
<keyword id="KW-0472">Membrane</keyword>
<keyword id="KW-0808">Transferase</keyword>
<keyword id="KW-0812">Transmembrane</keyword>
<keyword id="KW-1133">Transmembrane helix</keyword>
<reference key="1">
    <citation type="journal article" date="2008" name="PLoS Genet.">
        <title>Complete genome sequence of the N2-fixing broad host range endophyte Klebsiella pneumoniae 342 and virulence predictions verified in mice.</title>
        <authorList>
            <person name="Fouts D.E."/>
            <person name="Tyler H.L."/>
            <person name="DeBoy R.T."/>
            <person name="Daugherty S."/>
            <person name="Ren Q."/>
            <person name="Badger J.H."/>
            <person name="Durkin A.S."/>
            <person name="Huot H."/>
            <person name="Shrivastava S."/>
            <person name="Kothari S."/>
            <person name="Dodson R.J."/>
            <person name="Mohamoud Y."/>
            <person name="Khouri H."/>
            <person name="Roesch L.F.W."/>
            <person name="Krogfelt K.A."/>
            <person name="Struve C."/>
            <person name="Triplett E.W."/>
            <person name="Methe B.A."/>
        </authorList>
    </citation>
    <scope>NUCLEOTIDE SEQUENCE [LARGE SCALE GENOMIC DNA]</scope>
    <source>
        <strain>342</strain>
    </source>
</reference>
<proteinExistence type="inferred from homology"/>
<feature type="chain" id="PRO_1000137435" description="Phosphatidylglycerol--prolipoprotein diacylglyceryl transferase">
    <location>
        <begin position="1"/>
        <end position="291"/>
    </location>
</feature>
<feature type="transmembrane region" description="Helical" evidence="1">
    <location>
        <begin position="21"/>
        <end position="41"/>
    </location>
</feature>
<feature type="transmembrane region" description="Helical" evidence="1">
    <location>
        <begin position="60"/>
        <end position="80"/>
    </location>
</feature>
<feature type="transmembrane region" description="Helical" evidence="1">
    <location>
        <begin position="96"/>
        <end position="116"/>
    </location>
</feature>
<feature type="transmembrane region" description="Helical" evidence="1">
    <location>
        <begin position="130"/>
        <end position="150"/>
    </location>
</feature>
<feature type="transmembrane region" description="Helical" evidence="1">
    <location>
        <begin position="198"/>
        <end position="218"/>
    </location>
</feature>
<feature type="transmembrane region" description="Helical" evidence="1">
    <location>
        <begin position="225"/>
        <end position="245"/>
    </location>
</feature>
<feature type="transmembrane region" description="Helical" evidence="1">
    <location>
        <begin position="260"/>
        <end position="280"/>
    </location>
</feature>
<feature type="binding site" evidence="1">
    <location>
        <position position="143"/>
    </location>
    <ligand>
        <name>a 1,2-diacyl-sn-glycero-3-phospho-(1'-sn-glycerol)</name>
        <dbReference type="ChEBI" id="CHEBI:64716"/>
    </ligand>
</feature>
<dbReference type="EC" id="2.5.1.145" evidence="1"/>
<dbReference type="EMBL" id="CP000964">
    <property type="protein sequence ID" value="ACI08253.1"/>
    <property type="molecule type" value="Genomic_DNA"/>
</dbReference>
<dbReference type="SMR" id="B5XUQ1"/>
<dbReference type="KEGG" id="kpe:KPK_0878"/>
<dbReference type="HOGENOM" id="CLU_013386_1_0_6"/>
<dbReference type="UniPathway" id="UPA00664"/>
<dbReference type="Proteomes" id="UP000001734">
    <property type="component" value="Chromosome"/>
</dbReference>
<dbReference type="GO" id="GO:0005886">
    <property type="term" value="C:plasma membrane"/>
    <property type="evidence" value="ECO:0007669"/>
    <property type="project" value="UniProtKB-SubCell"/>
</dbReference>
<dbReference type="GO" id="GO:0008961">
    <property type="term" value="F:phosphatidylglycerol-prolipoprotein diacylglyceryl transferase activity"/>
    <property type="evidence" value="ECO:0007669"/>
    <property type="project" value="UniProtKB-UniRule"/>
</dbReference>
<dbReference type="GO" id="GO:0042158">
    <property type="term" value="P:lipoprotein biosynthetic process"/>
    <property type="evidence" value="ECO:0007669"/>
    <property type="project" value="UniProtKB-UniRule"/>
</dbReference>
<dbReference type="HAMAP" id="MF_01147">
    <property type="entry name" value="Lgt"/>
    <property type="match status" value="1"/>
</dbReference>
<dbReference type="InterPro" id="IPR001640">
    <property type="entry name" value="Lgt"/>
</dbReference>
<dbReference type="NCBIfam" id="TIGR00544">
    <property type="entry name" value="lgt"/>
    <property type="match status" value="1"/>
</dbReference>
<dbReference type="PANTHER" id="PTHR30589:SF0">
    <property type="entry name" value="PHOSPHATIDYLGLYCEROL--PROLIPOPROTEIN DIACYLGLYCERYL TRANSFERASE"/>
    <property type="match status" value="1"/>
</dbReference>
<dbReference type="PANTHER" id="PTHR30589">
    <property type="entry name" value="PROLIPOPROTEIN DIACYLGLYCERYL TRANSFERASE"/>
    <property type="match status" value="1"/>
</dbReference>
<dbReference type="Pfam" id="PF01790">
    <property type="entry name" value="LGT"/>
    <property type="match status" value="1"/>
</dbReference>
<dbReference type="PROSITE" id="PS01311">
    <property type="entry name" value="LGT"/>
    <property type="match status" value="1"/>
</dbReference>
<organism>
    <name type="scientific">Klebsiella pneumoniae (strain 342)</name>
    <dbReference type="NCBI Taxonomy" id="507522"/>
    <lineage>
        <taxon>Bacteria</taxon>
        <taxon>Pseudomonadati</taxon>
        <taxon>Pseudomonadota</taxon>
        <taxon>Gammaproteobacteria</taxon>
        <taxon>Enterobacterales</taxon>
        <taxon>Enterobacteriaceae</taxon>
        <taxon>Klebsiella/Raoultella group</taxon>
        <taxon>Klebsiella</taxon>
        <taxon>Klebsiella pneumoniae complex</taxon>
    </lineage>
</organism>
<gene>
    <name evidence="1" type="primary">lgt</name>
    <name type="ordered locus">KPK_0878</name>
</gene>
<sequence length="291" mass="32978">MNSGYLHFPDFDPVIFSLGPVSLHWYGLMYLVGFVFAMWLATRRANRPGSGWTKNEVENLLYAGFLGVFLGGRIGYVLFYNLPVFLADPLYLFRVWDGGMSFHGGLIGVILVMIIFARRTKRTFFQVSDFIAPLIPFGLGAGRLGNFINGELWGRVDPSFHYTMIFPGSRAEDLALLPTHPEWQSLFDTYGALPRHASQLYELALEGVVLFLILNLFIRKPRPTGSVSGLFLIGYGLFRIIVEFFRQPDAQFTGGWVQYISMGQILSIPMVLAGIIMMVWAYRHRPQQQNS</sequence>
<evidence type="ECO:0000255" key="1">
    <source>
        <dbReference type="HAMAP-Rule" id="MF_01147"/>
    </source>
</evidence>